<name>IR01_HCMVA</name>
<reference key="1">
    <citation type="journal article" date="1986" name="J. Mol. Biol.">
        <title>Sequence of the short unique region, short repeats, and part of the long repeats of human cytomegalovirus.</title>
        <authorList>
            <person name="Weston K.M."/>
            <person name="Barrell B.G."/>
        </authorList>
    </citation>
    <scope>NUCLEOTIDE SEQUENCE [GENOMIC DNA]</scope>
</reference>
<reference key="2">
    <citation type="journal article" date="1990" name="Curr. Top. Microbiol. Immunol.">
        <title>Analysis of the protein-coding content of the sequence of human cytomegalovirus strain AD169.</title>
        <authorList>
            <person name="Chee M.S."/>
            <person name="Bankier A.T."/>
            <person name="Beck S."/>
            <person name="Bohni R."/>
            <person name="Brown C.M."/>
            <person name="Cerny R."/>
            <person name="Horsnell T."/>
            <person name="Hutchison C.A. III"/>
            <person name="Kouzarides T."/>
            <person name="Martignetti J.A."/>
            <person name="Preddie E."/>
            <person name="Satchwell S.C."/>
            <person name="Tomlinson P."/>
            <person name="Weston K.M."/>
            <person name="Barrell B.G."/>
        </authorList>
    </citation>
    <scope>NUCLEOTIDE SEQUENCE [LARGE SCALE GENOMIC DNA]</scope>
</reference>
<reference key="3">
    <citation type="journal article" date="2003" name="J. Gen. Virol.">
        <title>The human cytomegalovirus genome revisited: comparison with the chimpanzee cytomegalovirus genome.</title>
        <authorList>
            <person name="Davison A.J."/>
            <person name="Dolan A."/>
            <person name="Akter P."/>
            <person name="Addison C."/>
            <person name="Dargan D.J."/>
            <person name="Alcendor D.J."/>
            <person name="McGeoch D.J."/>
            <person name="Hayward G.S."/>
        </authorList>
    </citation>
    <scope>GENOME REANNOTATION</scope>
</reference>
<reference key="4">
    <citation type="journal article" date="2003" name="J. Gen. Virol.">
        <authorList>
            <person name="Davison A.J."/>
            <person name="Dolan A."/>
            <person name="Akter P."/>
            <person name="Addison C."/>
            <person name="Dargan D.J."/>
            <person name="Alcendor D.J."/>
            <person name="McGeoch D.J."/>
            <person name="Hayward G.S."/>
        </authorList>
    </citation>
    <scope>ERRATUM OF PUBMED:12533697</scope>
</reference>
<feature type="chain" id="PRO_0000115249" description="Uncharacterized protein HKLF1">
    <location>
        <begin position="1"/>
        <end position="311"/>
    </location>
</feature>
<feature type="region of interest" description="Disordered" evidence="1">
    <location>
        <begin position="1"/>
        <end position="44"/>
    </location>
</feature>
<feature type="region of interest" description="Disordered" evidence="1">
    <location>
        <begin position="205"/>
        <end position="268"/>
    </location>
</feature>
<feature type="compositionally biased region" description="Polar residues" evidence="1">
    <location>
        <begin position="1"/>
        <end position="12"/>
    </location>
</feature>
<feature type="compositionally biased region" description="Basic and acidic residues" evidence="1">
    <location>
        <begin position="35"/>
        <end position="44"/>
    </location>
</feature>
<comment type="similarity">
    <text evidence="2">Belongs to the HHV-5 HKLF1 family.</text>
</comment>
<evidence type="ECO:0000256" key="1">
    <source>
        <dbReference type="SAM" id="MobiDB-lite"/>
    </source>
</evidence>
<evidence type="ECO:0000305" key="2"/>
<sequence length="311" mass="34822">MPATDTNSTHTTPLHPDAQHTLPLHHSNTQPHVQTSDKHADEEHRTQMELDAADYAACAQARQHLYDQTQPLLLAYPNTNPQDSAHFPTENQHQLTHPLHNIGEGAALGYPVPRAEIRRGGGDWADSASDFDADCWCMWGRFGTMGRQPVVTLLLARQRDGLADWNVVRCRGTGFRAHDSEDGVSVWRQHLVFLLGGHGRRVQLERPSAGEAQARGLLPRIRITPISTSPRRKPPHPATSTASHHPHASPRSDHTLFPVPSTPSATVHNPRNYAVQLHAETTRTWRWAQRGERGAWMPAETFTCPKDKRPW</sequence>
<organism>
    <name type="scientific">Human cytomegalovirus (strain AD169)</name>
    <name type="common">HHV-5</name>
    <name type="synonym">Human herpesvirus 5</name>
    <dbReference type="NCBI Taxonomy" id="10360"/>
    <lineage>
        <taxon>Viruses</taxon>
        <taxon>Duplodnaviria</taxon>
        <taxon>Heunggongvirae</taxon>
        <taxon>Peploviricota</taxon>
        <taxon>Herviviricetes</taxon>
        <taxon>Herpesvirales</taxon>
        <taxon>Orthoherpesviridae</taxon>
        <taxon>Betaherpesvirinae</taxon>
        <taxon>Cytomegalovirus</taxon>
        <taxon>Cytomegalovirus humanbeta5</taxon>
        <taxon>Human cytomegalovirus</taxon>
    </lineage>
</organism>
<accession>P09710</accession>
<accession>Q7M573</accession>
<organismHost>
    <name type="scientific">Homo sapiens</name>
    <name type="common">Human</name>
    <dbReference type="NCBI Taxonomy" id="9606"/>
</organismHost>
<keyword id="KW-1185">Reference proteome</keyword>
<protein>
    <recommendedName>
        <fullName>Uncharacterized protein HKLF1</fullName>
        <shortName>IRL1</shortName>
        <shortName>TRL1</shortName>
    </recommendedName>
</protein>
<dbReference type="EMBL" id="X17403">
    <property type="protein sequence ID" value="CAA35449.1"/>
    <property type="molecule type" value="Genomic_DNA"/>
</dbReference>
<dbReference type="EMBL" id="X17403">
    <property type="protein sequence ID" value="CAA35309.1"/>
    <property type="molecule type" value="Genomic_DNA"/>
</dbReference>
<dbReference type="EMBL" id="X04650">
    <property type="protein sequence ID" value="CAB37093.1"/>
    <property type="molecule type" value="Genomic_DNA"/>
</dbReference>
<dbReference type="EMBL" id="BK000394">
    <property type="protein sequence ID" value="DAA00090.1"/>
    <property type="molecule type" value="Genomic_DNA"/>
</dbReference>
<dbReference type="EMBL" id="BK000394">
    <property type="protein sequence ID" value="DAA00227.1"/>
    <property type="molecule type" value="Genomic_DNA"/>
</dbReference>
<dbReference type="PIR" id="A26078">
    <property type="entry name" value="QQBEC1"/>
</dbReference>
<dbReference type="Proteomes" id="UP000008991">
    <property type="component" value="Segment"/>
</dbReference>
<dbReference type="Proteomes" id="UP000008992">
    <property type="component" value="Segment"/>
</dbReference>
<dbReference type="InterPro" id="IPR016394">
    <property type="entry name" value="HHV5_RL1"/>
</dbReference>
<dbReference type="PIRSF" id="PIRSF003440">
    <property type="entry name" value="UCP003440"/>
    <property type="match status" value="1"/>
</dbReference>
<proteinExistence type="inferred from homology"/>